<reference key="1">
    <citation type="journal article" date="1995" name="Microbiology">
        <title>Complete nucleotide sequence of a skin element excised by DNA rearrangement during sporulation in Bacillus subtilis.</title>
        <authorList>
            <person name="Takemaru K."/>
            <person name="Mizuno M."/>
            <person name="Sato T."/>
            <person name="Takeuchi M."/>
            <person name="Kobayashi Y."/>
        </authorList>
    </citation>
    <scope>NUCLEOTIDE SEQUENCE [GENOMIC DNA]</scope>
    <source>
        <strain>168 / JH642</strain>
    </source>
</reference>
<reference key="2">
    <citation type="journal article" date="1996" name="Microbiology">
        <title>Systematic sequencing of the 283 kb 210 degrees-232 degrees region of the Bacillus subtilis genome containing the skin element and many sporulation genes.</title>
        <authorList>
            <person name="Mizuno M."/>
            <person name="Masuda S."/>
            <person name="Takemaru K."/>
            <person name="Hosono S."/>
            <person name="Sato T."/>
            <person name="Takeuchi M."/>
            <person name="Kobayashi Y."/>
        </authorList>
    </citation>
    <scope>NUCLEOTIDE SEQUENCE [GENOMIC DNA]</scope>
    <source>
        <strain>168 / JH642</strain>
    </source>
</reference>
<reference key="3">
    <citation type="journal article" date="1997" name="Nature">
        <title>The complete genome sequence of the Gram-positive bacterium Bacillus subtilis.</title>
        <authorList>
            <person name="Kunst F."/>
            <person name="Ogasawara N."/>
            <person name="Moszer I."/>
            <person name="Albertini A.M."/>
            <person name="Alloni G."/>
            <person name="Azevedo V."/>
            <person name="Bertero M.G."/>
            <person name="Bessieres P."/>
            <person name="Bolotin A."/>
            <person name="Borchert S."/>
            <person name="Borriss R."/>
            <person name="Boursier L."/>
            <person name="Brans A."/>
            <person name="Braun M."/>
            <person name="Brignell S.C."/>
            <person name="Bron S."/>
            <person name="Brouillet S."/>
            <person name="Bruschi C.V."/>
            <person name="Caldwell B."/>
            <person name="Capuano V."/>
            <person name="Carter N.M."/>
            <person name="Choi S.-K."/>
            <person name="Codani J.-J."/>
            <person name="Connerton I.F."/>
            <person name="Cummings N.J."/>
            <person name="Daniel R.A."/>
            <person name="Denizot F."/>
            <person name="Devine K.M."/>
            <person name="Duesterhoeft A."/>
            <person name="Ehrlich S.D."/>
            <person name="Emmerson P.T."/>
            <person name="Entian K.-D."/>
            <person name="Errington J."/>
            <person name="Fabret C."/>
            <person name="Ferrari E."/>
            <person name="Foulger D."/>
            <person name="Fritz C."/>
            <person name="Fujita M."/>
            <person name="Fujita Y."/>
            <person name="Fuma S."/>
            <person name="Galizzi A."/>
            <person name="Galleron N."/>
            <person name="Ghim S.-Y."/>
            <person name="Glaser P."/>
            <person name="Goffeau A."/>
            <person name="Golightly E.J."/>
            <person name="Grandi G."/>
            <person name="Guiseppi G."/>
            <person name="Guy B.J."/>
            <person name="Haga K."/>
            <person name="Haiech J."/>
            <person name="Harwood C.R."/>
            <person name="Henaut A."/>
            <person name="Hilbert H."/>
            <person name="Holsappel S."/>
            <person name="Hosono S."/>
            <person name="Hullo M.-F."/>
            <person name="Itaya M."/>
            <person name="Jones L.-M."/>
            <person name="Joris B."/>
            <person name="Karamata D."/>
            <person name="Kasahara Y."/>
            <person name="Klaerr-Blanchard M."/>
            <person name="Klein C."/>
            <person name="Kobayashi Y."/>
            <person name="Koetter P."/>
            <person name="Koningstein G."/>
            <person name="Krogh S."/>
            <person name="Kumano M."/>
            <person name="Kurita K."/>
            <person name="Lapidus A."/>
            <person name="Lardinois S."/>
            <person name="Lauber J."/>
            <person name="Lazarevic V."/>
            <person name="Lee S.-M."/>
            <person name="Levine A."/>
            <person name="Liu H."/>
            <person name="Masuda S."/>
            <person name="Mauel C."/>
            <person name="Medigue C."/>
            <person name="Medina N."/>
            <person name="Mellado R.P."/>
            <person name="Mizuno M."/>
            <person name="Moestl D."/>
            <person name="Nakai S."/>
            <person name="Noback M."/>
            <person name="Noone D."/>
            <person name="O'Reilly M."/>
            <person name="Ogawa K."/>
            <person name="Ogiwara A."/>
            <person name="Oudega B."/>
            <person name="Park S.-H."/>
            <person name="Parro V."/>
            <person name="Pohl T.M."/>
            <person name="Portetelle D."/>
            <person name="Porwollik S."/>
            <person name="Prescott A.M."/>
            <person name="Presecan E."/>
            <person name="Pujic P."/>
            <person name="Purnelle B."/>
            <person name="Rapoport G."/>
            <person name="Rey M."/>
            <person name="Reynolds S."/>
            <person name="Rieger M."/>
            <person name="Rivolta C."/>
            <person name="Rocha E."/>
            <person name="Roche B."/>
            <person name="Rose M."/>
            <person name="Sadaie Y."/>
            <person name="Sato T."/>
            <person name="Scanlan E."/>
            <person name="Schleich S."/>
            <person name="Schroeter R."/>
            <person name="Scoffone F."/>
            <person name="Sekiguchi J."/>
            <person name="Sekowska A."/>
            <person name="Seror S.J."/>
            <person name="Serror P."/>
            <person name="Shin B.-S."/>
            <person name="Soldo B."/>
            <person name="Sorokin A."/>
            <person name="Tacconi E."/>
            <person name="Takagi T."/>
            <person name="Takahashi H."/>
            <person name="Takemaru K."/>
            <person name="Takeuchi M."/>
            <person name="Tamakoshi A."/>
            <person name="Tanaka T."/>
            <person name="Terpstra P."/>
            <person name="Tognoni A."/>
            <person name="Tosato V."/>
            <person name="Uchiyama S."/>
            <person name="Vandenbol M."/>
            <person name="Vannier F."/>
            <person name="Vassarotti A."/>
            <person name="Viari A."/>
            <person name="Wambutt R."/>
            <person name="Wedler E."/>
            <person name="Wedler H."/>
            <person name="Weitzenegger T."/>
            <person name="Winters P."/>
            <person name="Wipat A."/>
            <person name="Yamamoto H."/>
            <person name="Yamane K."/>
            <person name="Yasumoto K."/>
            <person name="Yata K."/>
            <person name="Yoshida K."/>
            <person name="Yoshikawa H.-F."/>
            <person name="Zumstein E."/>
            <person name="Yoshikawa H."/>
            <person name="Danchin A."/>
        </authorList>
    </citation>
    <scope>NUCLEOTIDE SEQUENCE [LARGE SCALE GENOMIC DNA]</scope>
    <source>
        <strain>168</strain>
    </source>
</reference>
<reference key="4">
    <citation type="journal article" date="2009" name="Microbiology">
        <title>From a consortium sequence to a unified sequence: the Bacillus subtilis 168 reference genome a decade later.</title>
        <authorList>
            <person name="Barbe V."/>
            <person name="Cruveiller S."/>
            <person name="Kunst F."/>
            <person name="Lenoble P."/>
            <person name="Meurice G."/>
            <person name="Sekowska A."/>
            <person name="Vallenet D."/>
            <person name="Wang T."/>
            <person name="Moszer I."/>
            <person name="Medigue C."/>
            <person name="Danchin A."/>
        </authorList>
    </citation>
    <scope>SEQUENCE REVISION TO 126</scope>
</reference>
<reference key="5">
    <citation type="journal article" date="1995" name="Gene">
        <title>Analysis of a Bacillus subtilis genome fragment using a co-operative computer system prototype.</title>
        <authorList>
            <person name="Medigue C."/>
            <person name="Moszer I."/>
            <person name="Viari A."/>
            <person name="Danchin A."/>
        </authorList>
    </citation>
    <scope>IDENTIFICATION</scope>
</reference>
<reference key="6">
    <citation type="journal article" date="2021" name="Nat. Commun.">
        <title>Large-scale computational discovery and analysis of virus-derived microbial nanocompartments.</title>
        <authorList>
            <person name="Andreas M.P."/>
            <person name="Giessen T.W."/>
        </authorList>
    </citation>
    <scope>PUTATIVE FUNCTION</scope>
    <scope>CLASSIFICATION</scope>
</reference>
<sequence>MRNQEVINKAEMTLSTLESGGIMNPTQASTFIRMVQDTPTILRDARVIQMDHDTQKIEKIGFGQRILRAAQEGVALTKDQKSVPSTSTVNLSTKEVIAEVNITYDTLENNIEKDGLQNTIMQMIAERAAVDIEELLVNGDTSSSDSYLAQLDGIRKQATSHIVDAAGEELTRQTFKRGYKAVPPKYLRIPQEFRFYTSPGIEVEWKDRVADRQTNLGDAAVQGGLSSAFGVPIKGIANLQPYTIGEGDTAADVSDIILTHPKNIILGFSRNIRIEVDKDIRRRMFIIVLTAKLDSVFEEEDAVAKIVKVKE</sequence>
<organism>
    <name type="scientific">Bacillus subtilis (strain 168)</name>
    <dbReference type="NCBI Taxonomy" id="224308"/>
    <lineage>
        <taxon>Bacteria</taxon>
        <taxon>Bacillati</taxon>
        <taxon>Bacillota</taxon>
        <taxon>Bacilli</taxon>
        <taxon>Bacillales</taxon>
        <taxon>Bacillaceae</taxon>
        <taxon>Bacillus</taxon>
    </lineage>
</organism>
<comment type="function">
    <text evidence="2">Possibly a prophage capsid protein.</text>
</comment>
<comment type="similarity">
    <text evidence="2">Belongs to the encapsulin family. Family 3 subfamily.</text>
</comment>
<name>YQBE_BACSU</name>
<dbReference type="EMBL" id="D32216">
    <property type="protein sequence ID" value="BAA06938.1"/>
    <property type="molecule type" value="Genomic_DNA"/>
</dbReference>
<dbReference type="EMBL" id="D84432">
    <property type="protein sequence ID" value="BAA12400.1"/>
    <property type="molecule type" value="Genomic_DNA"/>
</dbReference>
<dbReference type="EMBL" id="AL009126">
    <property type="protein sequence ID" value="CAB14555.2"/>
    <property type="molecule type" value="Genomic_DNA"/>
</dbReference>
<dbReference type="PIR" id="H69946">
    <property type="entry name" value="H69946"/>
</dbReference>
<dbReference type="RefSeq" id="NP_390491.2">
    <property type="nucleotide sequence ID" value="NC_000964.3"/>
</dbReference>
<dbReference type="RefSeq" id="WP_003229922.1">
    <property type="nucleotide sequence ID" value="NZ_OZ025638.1"/>
</dbReference>
<dbReference type="FunCoup" id="P45921">
    <property type="interactions" value="81"/>
</dbReference>
<dbReference type="STRING" id="224308.BSU26140"/>
<dbReference type="PaxDb" id="224308-BSU26140"/>
<dbReference type="EnsemblBacteria" id="CAB14555">
    <property type="protein sequence ID" value="CAB14555"/>
    <property type="gene ID" value="BSU_26140"/>
</dbReference>
<dbReference type="GeneID" id="937722"/>
<dbReference type="KEGG" id="bsu:BSU26140"/>
<dbReference type="PATRIC" id="fig|224308.179.peg.2840"/>
<dbReference type="eggNOG" id="COG4653">
    <property type="taxonomic scope" value="Bacteria"/>
</dbReference>
<dbReference type="InParanoid" id="P45921"/>
<dbReference type="OrthoDB" id="2079182at2"/>
<dbReference type="BioCyc" id="BSUB:BSU26140-MONOMER"/>
<dbReference type="Proteomes" id="UP000001570">
    <property type="component" value="Chromosome"/>
</dbReference>
<dbReference type="SUPFAM" id="SSF56563">
    <property type="entry name" value="Major capsid protein gp5"/>
    <property type="match status" value="1"/>
</dbReference>
<feature type="chain" id="PRO_0000049756" description="Putative prophage capsid protein YqbE">
    <location>
        <begin position="1"/>
        <end position="311"/>
    </location>
</feature>
<feature type="sequence conflict" description="In Ref. 1; BAA06938 and 2; BAA12400." evidence="1" ref="1 2">
    <original>E</original>
    <variation>D</variation>
    <location>
        <position position="126"/>
    </location>
</feature>
<keyword id="KW-1185">Reference proteome</keyword>
<gene>
    <name type="primary">yqbE</name>
    <name type="ordered locus">BSU26140</name>
</gene>
<evidence type="ECO:0000305" key="1"/>
<evidence type="ECO:0000305" key="2">
    <source>
    </source>
</evidence>
<proteinExistence type="inferred from homology"/>
<accession>P45921</accession>
<protein>
    <recommendedName>
        <fullName evidence="2">Putative prophage capsid protein YqbE</fullName>
    </recommendedName>
</protein>